<comment type="function">
    <text evidence="1">Involved in the third step of the chorismate pathway, which leads to the biosynthesis of aromatic amino acids. Catalyzes the cis-dehydration of 3-dehydroquinate (DHQ) and introduces the first double bond of the aromatic ring to yield 3-dehydroshikimate.</text>
</comment>
<comment type="catalytic activity">
    <reaction evidence="1">
        <text>3-dehydroquinate = 3-dehydroshikimate + H2O</text>
        <dbReference type="Rhea" id="RHEA:21096"/>
        <dbReference type="ChEBI" id="CHEBI:15377"/>
        <dbReference type="ChEBI" id="CHEBI:16630"/>
        <dbReference type="ChEBI" id="CHEBI:32364"/>
        <dbReference type="EC" id="4.2.1.10"/>
    </reaction>
</comment>
<comment type="pathway">
    <text evidence="1">Metabolic intermediate biosynthesis; chorismate biosynthesis; chorismate from D-erythrose 4-phosphate and phosphoenolpyruvate: step 3/7.</text>
</comment>
<comment type="subunit">
    <text evidence="1">Homodimer.</text>
</comment>
<comment type="similarity">
    <text evidence="1">Belongs to the type-I 3-dehydroquinase family.</text>
</comment>
<sequence>MKLVVSVTPRNLEEAQQIDAQRFVDADLIEWRADFLEKEEILKVAPAIFEKFAGRELIFTLRTKDEGGHIQLSDDEYVEMIKKVAQLYQPDYVDFEYFSHKDKIDEMLEFPNLVLSYHNFEETPENMMEILSELTSLTPKAVKVSVMANSGQDVLDLMNYTRGFKTLNPEQEYVTISMGRVGRISRIASDLTGSSWSFASLDEATAPGQISLSSMKKIRDILNEN</sequence>
<gene>
    <name evidence="1" type="primary">aroD</name>
    <name type="ordered locus">SGO_1375</name>
</gene>
<reference key="1">
    <citation type="journal article" date="2007" name="J. Bacteriol.">
        <title>Genome-wide transcriptional changes in Streptococcus gordonii in response to competence signaling peptide.</title>
        <authorList>
            <person name="Vickerman M.M."/>
            <person name="Iobst S."/>
            <person name="Jesionowski A.M."/>
            <person name="Gill S.R."/>
        </authorList>
    </citation>
    <scope>NUCLEOTIDE SEQUENCE [LARGE SCALE GENOMIC DNA]</scope>
    <source>
        <strain>Challis / ATCC 35105 / BCRC 15272 / CH1 / DL1 / V288</strain>
    </source>
</reference>
<evidence type="ECO:0000255" key="1">
    <source>
        <dbReference type="HAMAP-Rule" id="MF_00214"/>
    </source>
</evidence>
<accession>A8AXZ6</accession>
<dbReference type="EC" id="4.2.1.10" evidence="1"/>
<dbReference type="EMBL" id="CP000725">
    <property type="protein sequence ID" value="ABV10967.1"/>
    <property type="molecule type" value="Genomic_DNA"/>
</dbReference>
<dbReference type="RefSeq" id="WP_012130463.1">
    <property type="nucleotide sequence ID" value="NC_009785.1"/>
</dbReference>
<dbReference type="SMR" id="A8AXZ6"/>
<dbReference type="STRING" id="467705.SGO_1375"/>
<dbReference type="GeneID" id="93787596"/>
<dbReference type="KEGG" id="sgo:SGO_1375"/>
<dbReference type="eggNOG" id="COG0710">
    <property type="taxonomic scope" value="Bacteria"/>
</dbReference>
<dbReference type="HOGENOM" id="CLU_064444_0_0_9"/>
<dbReference type="UniPathway" id="UPA00053">
    <property type="reaction ID" value="UER00086"/>
</dbReference>
<dbReference type="Proteomes" id="UP000001131">
    <property type="component" value="Chromosome"/>
</dbReference>
<dbReference type="GO" id="GO:0003855">
    <property type="term" value="F:3-dehydroquinate dehydratase activity"/>
    <property type="evidence" value="ECO:0007669"/>
    <property type="project" value="UniProtKB-UniRule"/>
</dbReference>
<dbReference type="GO" id="GO:0046279">
    <property type="term" value="P:3,4-dihydroxybenzoate biosynthetic process"/>
    <property type="evidence" value="ECO:0007669"/>
    <property type="project" value="TreeGrafter"/>
</dbReference>
<dbReference type="GO" id="GO:0008652">
    <property type="term" value="P:amino acid biosynthetic process"/>
    <property type="evidence" value="ECO:0007669"/>
    <property type="project" value="UniProtKB-KW"/>
</dbReference>
<dbReference type="GO" id="GO:0009073">
    <property type="term" value="P:aromatic amino acid family biosynthetic process"/>
    <property type="evidence" value="ECO:0007669"/>
    <property type="project" value="UniProtKB-KW"/>
</dbReference>
<dbReference type="GO" id="GO:0009423">
    <property type="term" value="P:chorismate biosynthetic process"/>
    <property type="evidence" value="ECO:0007669"/>
    <property type="project" value="UniProtKB-UniRule"/>
</dbReference>
<dbReference type="CDD" id="cd00502">
    <property type="entry name" value="DHQase_I"/>
    <property type="match status" value="1"/>
</dbReference>
<dbReference type="FunFam" id="3.20.20.70:FF:000047">
    <property type="entry name" value="3-dehydroquinate dehydratase"/>
    <property type="match status" value="1"/>
</dbReference>
<dbReference type="Gene3D" id="3.20.20.70">
    <property type="entry name" value="Aldolase class I"/>
    <property type="match status" value="1"/>
</dbReference>
<dbReference type="HAMAP" id="MF_00214">
    <property type="entry name" value="AroD"/>
    <property type="match status" value="1"/>
</dbReference>
<dbReference type="InterPro" id="IPR013785">
    <property type="entry name" value="Aldolase_TIM"/>
</dbReference>
<dbReference type="InterPro" id="IPR001381">
    <property type="entry name" value="DHquinase_I"/>
</dbReference>
<dbReference type="InterPro" id="IPR050146">
    <property type="entry name" value="Type-I_3-dehydroquinase"/>
</dbReference>
<dbReference type="NCBIfam" id="TIGR01093">
    <property type="entry name" value="aroD"/>
    <property type="match status" value="1"/>
</dbReference>
<dbReference type="PANTHER" id="PTHR43699">
    <property type="entry name" value="3-DEHYDROQUINATE DEHYDRATASE"/>
    <property type="match status" value="1"/>
</dbReference>
<dbReference type="PANTHER" id="PTHR43699:SF1">
    <property type="entry name" value="3-DEHYDROQUINATE DEHYDRATASE"/>
    <property type="match status" value="1"/>
</dbReference>
<dbReference type="Pfam" id="PF01487">
    <property type="entry name" value="DHquinase_I"/>
    <property type="match status" value="1"/>
</dbReference>
<dbReference type="SUPFAM" id="SSF51569">
    <property type="entry name" value="Aldolase"/>
    <property type="match status" value="1"/>
</dbReference>
<name>AROD_STRGC</name>
<keyword id="KW-0028">Amino-acid biosynthesis</keyword>
<keyword id="KW-0057">Aromatic amino acid biosynthesis</keyword>
<keyword id="KW-0456">Lyase</keyword>
<keyword id="KW-1185">Reference proteome</keyword>
<keyword id="KW-0704">Schiff base</keyword>
<proteinExistence type="inferred from homology"/>
<protein>
    <recommendedName>
        <fullName evidence="1">3-dehydroquinate dehydratase</fullName>
        <shortName evidence="1">3-dehydroquinase</shortName>
        <ecNumber evidence="1">4.2.1.10</ecNumber>
    </recommendedName>
    <alternativeName>
        <fullName evidence="1">Type I DHQase</fullName>
    </alternativeName>
    <alternativeName>
        <fullName evidence="1">Type I dehydroquinase</fullName>
        <shortName evidence="1">DHQ1</shortName>
    </alternativeName>
</protein>
<feature type="chain" id="PRO_1000078051" description="3-dehydroquinate dehydratase">
    <location>
        <begin position="1"/>
        <end position="225"/>
    </location>
</feature>
<feature type="active site" description="Proton donor/acceptor" evidence="1">
    <location>
        <position position="118"/>
    </location>
</feature>
<feature type="active site" description="Schiff-base intermediate with substrate" evidence="1">
    <location>
        <position position="143"/>
    </location>
</feature>
<feature type="binding site" evidence="1">
    <location>
        <position position="6"/>
    </location>
    <ligand>
        <name>3-dehydroquinate</name>
        <dbReference type="ChEBI" id="CHEBI:32364"/>
    </ligand>
</feature>
<feature type="binding site" evidence="1">
    <location>
        <begin position="30"/>
        <end position="32"/>
    </location>
    <ligand>
        <name>3-dehydroquinate</name>
        <dbReference type="ChEBI" id="CHEBI:32364"/>
    </ligand>
</feature>
<feature type="binding site" evidence="1">
    <location>
        <position position="62"/>
    </location>
    <ligand>
        <name>3-dehydroquinate</name>
        <dbReference type="ChEBI" id="CHEBI:32364"/>
    </ligand>
</feature>
<feature type="binding site" evidence="1">
    <location>
        <position position="186"/>
    </location>
    <ligand>
        <name>3-dehydroquinate</name>
        <dbReference type="ChEBI" id="CHEBI:32364"/>
    </ligand>
</feature>
<feature type="binding site" evidence="1">
    <location>
        <position position="205"/>
    </location>
    <ligand>
        <name>3-dehydroquinate</name>
        <dbReference type="ChEBI" id="CHEBI:32364"/>
    </ligand>
</feature>
<feature type="binding site" evidence="1">
    <location>
        <position position="209"/>
    </location>
    <ligand>
        <name>3-dehydroquinate</name>
        <dbReference type="ChEBI" id="CHEBI:32364"/>
    </ligand>
</feature>
<organism>
    <name type="scientific">Streptococcus gordonii (strain Challis / ATCC 35105 / BCRC 15272 / CH1 / DL1 / V288)</name>
    <dbReference type="NCBI Taxonomy" id="467705"/>
    <lineage>
        <taxon>Bacteria</taxon>
        <taxon>Bacillati</taxon>
        <taxon>Bacillota</taxon>
        <taxon>Bacilli</taxon>
        <taxon>Lactobacillales</taxon>
        <taxon>Streptococcaceae</taxon>
        <taxon>Streptococcus</taxon>
    </lineage>
</organism>